<comment type="function">
    <text evidence="1">Regulatory subunit of protein phosphatase 1.</text>
</comment>
<comment type="subcellular location">
    <subcellularLocation>
        <location evidence="1">Nucleus</location>
    </subcellularLocation>
</comment>
<comment type="similarity">
    <text evidence="3">Belongs to the SDS22 family.</text>
</comment>
<gene>
    <name type="primary">ppp1r7</name>
    <name type="synonym">sds22</name>
</gene>
<sequence>MADEEGETEVQEMEVDRRESDESADDEAKEKPDRVDGGVKNGEVPLGEADAPVDIETINLDPEAEDVDLNHFKIGKIQGFEVLKKVKTLCLRQNLIKLIENLEQLVTLTELDLYDNQIRKIGNLETLRDLQILDLSFNLLRRIEGLESLSHLQRLYLVNNKISRIENFGTLTQLRLLELGSNRLRVIENLDSLRELDSLFLGKNKITKLQNLETLTNLTVLSVQSNRLTKIEGLQNLVNLRELYLSDNGIQVIEGLENNNKLTTLDLASNRIKRIENIKHLSELQEFWMNDNLVENWSDLEELSGAPGLQTVYLERNPLQKDAQYRRKIMLALPSVRQIDATFVRF</sequence>
<name>PP1R7_XENTR</name>
<reference key="1">
    <citation type="submission" date="2004-06" db="EMBL/GenBank/DDBJ databases">
        <authorList>
            <consortium name="NIH - Xenopus Gene Collection (XGC) project"/>
        </authorList>
    </citation>
    <scope>NUCLEOTIDE SEQUENCE [LARGE SCALE MRNA]</scope>
    <source>
        <tissue>Embryo</tissue>
    </source>
</reference>
<keyword id="KW-0433">Leucine-rich repeat</keyword>
<keyword id="KW-0539">Nucleus</keyword>
<keyword id="KW-1185">Reference proteome</keyword>
<keyword id="KW-0677">Repeat</keyword>
<organism>
    <name type="scientific">Xenopus tropicalis</name>
    <name type="common">Western clawed frog</name>
    <name type="synonym">Silurana tropicalis</name>
    <dbReference type="NCBI Taxonomy" id="8364"/>
    <lineage>
        <taxon>Eukaryota</taxon>
        <taxon>Metazoa</taxon>
        <taxon>Chordata</taxon>
        <taxon>Craniata</taxon>
        <taxon>Vertebrata</taxon>
        <taxon>Euteleostomi</taxon>
        <taxon>Amphibia</taxon>
        <taxon>Batrachia</taxon>
        <taxon>Anura</taxon>
        <taxon>Pipoidea</taxon>
        <taxon>Pipidae</taxon>
        <taxon>Xenopodinae</taxon>
        <taxon>Xenopus</taxon>
        <taxon>Silurana</taxon>
    </lineage>
</organism>
<accession>Q6DIQ3</accession>
<feature type="chain" id="PRO_0000239618" description="Protein phosphatase 1 regulatory subunit 7">
    <location>
        <begin position="1"/>
        <end position="346"/>
    </location>
</feature>
<feature type="repeat" description="LRR 1">
    <location>
        <begin position="63"/>
        <end position="84"/>
    </location>
</feature>
<feature type="repeat" description="LRR 2">
    <location>
        <begin position="85"/>
        <end position="106"/>
    </location>
</feature>
<feature type="repeat" description="LRR 3">
    <location>
        <begin position="107"/>
        <end position="128"/>
    </location>
</feature>
<feature type="repeat" description="LRR 4">
    <location>
        <begin position="129"/>
        <end position="150"/>
    </location>
</feature>
<feature type="repeat" description="LRR 5">
    <location>
        <begin position="151"/>
        <end position="172"/>
    </location>
</feature>
<feature type="repeat" description="LRR 6">
    <location>
        <begin position="173"/>
        <end position="194"/>
    </location>
</feature>
<feature type="repeat" description="LRR 7">
    <location>
        <begin position="195"/>
        <end position="216"/>
    </location>
</feature>
<feature type="repeat" description="LRR 8">
    <location>
        <begin position="217"/>
        <end position="238"/>
    </location>
</feature>
<feature type="repeat" description="LRR 9">
    <location>
        <begin position="239"/>
        <end position="260"/>
    </location>
</feature>
<feature type="repeat" description="LRR 10">
    <location>
        <begin position="261"/>
        <end position="282"/>
    </location>
</feature>
<feature type="repeat" description="LRR 11">
    <location>
        <begin position="283"/>
        <end position="304"/>
    </location>
</feature>
<feature type="domain" description="LRRCT">
    <location>
        <begin position="317"/>
        <end position="346"/>
    </location>
</feature>
<feature type="region of interest" description="Disordered" evidence="2">
    <location>
        <begin position="1"/>
        <end position="46"/>
    </location>
</feature>
<feature type="compositionally biased region" description="Acidic residues" evidence="2">
    <location>
        <begin position="1"/>
        <end position="13"/>
    </location>
</feature>
<feature type="compositionally biased region" description="Basic and acidic residues" evidence="2">
    <location>
        <begin position="14"/>
        <end position="37"/>
    </location>
</feature>
<proteinExistence type="evidence at transcript level"/>
<evidence type="ECO:0000250" key="1"/>
<evidence type="ECO:0000256" key="2">
    <source>
        <dbReference type="SAM" id="MobiDB-lite"/>
    </source>
</evidence>
<evidence type="ECO:0000305" key="3"/>
<dbReference type="EMBL" id="BC075482">
    <property type="protein sequence ID" value="AAH75482.1"/>
    <property type="molecule type" value="mRNA"/>
</dbReference>
<dbReference type="RefSeq" id="NP_001006731.1">
    <property type="nucleotide sequence ID" value="NM_001006730.1"/>
</dbReference>
<dbReference type="SMR" id="Q6DIQ3"/>
<dbReference type="FunCoup" id="Q6DIQ3">
    <property type="interactions" value="1537"/>
</dbReference>
<dbReference type="STRING" id="8364.ENSXETP00000047104"/>
<dbReference type="PaxDb" id="8364-ENSXETP00000026543"/>
<dbReference type="DNASU" id="448394"/>
<dbReference type="GeneID" id="448394"/>
<dbReference type="KEGG" id="xtr:448394"/>
<dbReference type="AGR" id="Xenbase:XB-GENE-964679"/>
<dbReference type="CTD" id="5510"/>
<dbReference type="Xenbase" id="XB-GENE-964679">
    <property type="gene designation" value="ppp1r7"/>
</dbReference>
<dbReference type="eggNOG" id="KOG0531">
    <property type="taxonomic scope" value="Eukaryota"/>
</dbReference>
<dbReference type="HOGENOM" id="CLU_044236_1_1_1"/>
<dbReference type="InParanoid" id="Q6DIQ3"/>
<dbReference type="OMA" id="EVWASYN"/>
<dbReference type="OrthoDB" id="7451790at2759"/>
<dbReference type="PhylomeDB" id="Q6DIQ3"/>
<dbReference type="TreeFam" id="TF105538"/>
<dbReference type="Proteomes" id="UP000008143">
    <property type="component" value="Chromosome 5"/>
</dbReference>
<dbReference type="GO" id="GO:0005634">
    <property type="term" value="C:nucleus"/>
    <property type="evidence" value="ECO:0007669"/>
    <property type="project" value="UniProtKB-SubCell"/>
</dbReference>
<dbReference type="FunFam" id="3.80.10.10:FF:000055">
    <property type="entry name" value="Protein phosphatase 1 regulatory subunit 7"/>
    <property type="match status" value="1"/>
</dbReference>
<dbReference type="FunFam" id="3.80.10.10:FF:000127">
    <property type="entry name" value="protein phosphatase 1 regulatory subunit 7 isoform X2"/>
    <property type="match status" value="1"/>
</dbReference>
<dbReference type="Gene3D" id="3.80.10.10">
    <property type="entry name" value="Ribonuclease Inhibitor"/>
    <property type="match status" value="2"/>
</dbReference>
<dbReference type="InterPro" id="IPR050576">
    <property type="entry name" value="Cilia_flagella_integrity"/>
</dbReference>
<dbReference type="InterPro" id="IPR001611">
    <property type="entry name" value="Leu-rich_rpt"/>
</dbReference>
<dbReference type="InterPro" id="IPR025875">
    <property type="entry name" value="Leu-rich_rpt_4"/>
</dbReference>
<dbReference type="InterPro" id="IPR003591">
    <property type="entry name" value="Leu-rich_rpt_typical-subtyp"/>
</dbReference>
<dbReference type="InterPro" id="IPR032675">
    <property type="entry name" value="LRR_dom_sf"/>
</dbReference>
<dbReference type="InterPro" id="IPR003603">
    <property type="entry name" value="U2A'_phosphoprotein32A_C"/>
</dbReference>
<dbReference type="PANTHER" id="PTHR45973:SF9">
    <property type="entry name" value="LEUCINE-RICH REPEAT-CONTAINING PROTEIN 46"/>
    <property type="match status" value="1"/>
</dbReference>
<dbReference type="PANTHER" id="PTHR45973">
    <property type="entry name" value="PROTEIN PHOSPHATASE 1 REGULATORY SUBUNIT SDS22-RELATED"/>
    <property type="match status" value="1"/>
</dbReference>
<dbReference type="Pfam" id="PF12799">
    <property type="entry name" value="LRR_4"/>
    <property type="match status" value="2"/>
</dbReference>
<dbReference type="Pfam" id="PF14580">
    <property type="entry name" value="LRR_9"/>
    <property type="match status" value="1"/>
</dbReference>
<dbReference type="SMART" id="SM00365">
    <property type="entry name" value="LRR_SD22"/>
    <property type="match status" value="10"/>
</dbReference>
<dbReference type="SMART" id="SM00369">
    <property type="entry name" value="LRR_TYP"/>
    <property type="match status" value="6"/>
</dbReference>
<dbReference type="SMART" id="SM00446">
    <property type="entry name" value="LRRcap"/>
    <property type="match status" value="2"/>
</dbReference>
<dbReference type="SUPFAM" id="SSF52058">
    <property type="entry name" value="L domain-like"/>
    <property type="match status" value="1"/>
</dbReference>
<dbReference type="PROSITE" id="PS51450">
    <property type="entry name" value="LRR"/>
    <property type="match status" value="11"/>
</dbReference>
<protein>
    <recommendedName>
        <fullName>Protein phosphatase 1 regulatory subunit 7</fullName>
    </recommendedName>
    <alternativeName>
        <fullName>Protein phosphatase 1 regulatory subunit 22</fullName>
    </alternativeName>
</protein>